<proteinExistence type="evidence at protein level"/>
<reference key="1">
    <citation type="journal article" date="2004" name="DNA Res.">
        <title>Prediction of the coding sequences of mouse homologues of KIAA gene: IV. The complete nucleotide sequences of 500 mouse KIAA-homologous cDNAs identified by screening of terminal sequences of cDNA clones randomly sampled from size-fractionated libraries.</title>
        <authorList>
            <person name="Okazaki N."/>
            <person name="Kikuno R."/>
            <person name="Ohara R."/>
            <person name="Inamoto S."/>
            <person name="Koseki H."/>
            <person name="Hiraoka S."/>
            <person name="Saga Y."/>
            <person name="Seino S."/>
            <person name="Nishimura M."/>
            <person name="Kaisho T."/>
            <person name="Hoshino K."/>
            <person name="Kitamura H."/>
            <person name="Nagase T."/>
            <person name="Ohara O."/>
            <person name="Koga H."/>
        </authorList>
    </citation>
    <scope>NUCLEOTIDE SEQUENCE [LARGE SCALE MRNA]</scope>
    <source>
        <tissue>Thymus</tissue>
    </source>
</reference>
<reference key="2">
    <citation type="journal article" date="2005" name="Science">
        <title>The transcriptional landscape of the mammalian genome.</title>
        <authorList>
            <person name="Carninci P."/>
            <person name="Kasukawa T."/>
            <person name="Katayama S."/>
            <person name="Gough J."/>
            <person name="Frith M.C."/>
            <person name="Maeda N."/>
            <person name="Oyama R."/>
            <person name="Ravasi T."/>
            <person name="Lenhard B."/>
            <person name="Wells C."/>
            <person name="Kodzius R."/>
            <person name="Shimokawa K."/>
            <person name="Bajic V.B."/>
            <person name="Brenner S.E."/>
            <person name="Batalov S."/>
            <person name="Forrest A.R."/>
            <person name="Zavolan M."/>
            <person name="Davis M.J."/>
            <person name="Wilming L.G."/>
            <person name="Aidinis V."/>
            <person name="Allen J.E."/>
            <person name="Ambesi-Impiombato A."/>
            <person name="Apweiler R."/>
            <person name="Aturaliya R.N."/>
            <person name="Bailey T.L."/>
            <person name="Bansal M."/>
            <person name="Baxter L."/>
            <person name="Beisel K.W."/>
            <person name="Bersano T."/>
            <person name="Bono H."/>
            <person name="Chalk A.M."/>
            <person name="Chiu K.P."/>
            <person name="Choudhary V."/>
            <person name="Christoffels A."/>
            <person name="Clutterbuck D.R."/>
            <person name="Crowe M.L."/>
            <person name="Dalla E."/>
            <person name="Dalrymple B.P."/>
            <person name="de Bono B."/>
            <person name="Della Gatta G."/>
            <person name="di Bernardo D."/>
            <person name="Down T."/>
            <person name="Engstrom P."/>
            <person name="Fagiolini M."/>
            <person name="Faulkner G."/>
            <person name="Fletcher C.F."/>
            <person name="Fukushima T."/>
            <person name="Furuno M."/>
            <person name="Futaki S."/>
            <person name="Gariboldi M."/>
            <person name="Georgii-Hemming P."/>
            <person name="Gingeras T.R."/>
            <person name="Gojobori T."/>
            <person name="Green R.E."/>
            <person name="Gustincich S."/>
            <person name="Harbers M."/>
            <person name="Hayashi Y."/>
            <person name="Hensch T.K."/>
            <person name="Hirokawa N."/>
            <person name="Hill D."/>
            <person name="Huminiecki L."/>
            <person name="Iacono M."/>
            <person name="Ikeo K."/>
            <person name="Iwama A."/>
            <person name="Ishikawa T."/>
            <person name="Jakt M."/>
            <person name="Kanapin A."/>
            <person name="Katoh M."/>
            <person name="Kawasawa Y."/>
            <person name="Kelso J."/>
            <person name="Kitamura H."/>
            <person name="Kitano H."/>
            <person name="Kollias G."/>
            <person name="Krishnan S.P."/>
            <person name="Kruger A."/>
            <person name="Kummerfeld S.K."/>
            <person name="Kurochkin I.V."/>
            <person name="Lareau L.F."/>
            <person name="Lazarevic D."/>
            <person name="Lipovich L."/>
            <person name="Liu J."/>
            <person name="Liuni S."/>
            <person name="McWilliam S."/>
            <person name="Madan Babu M."/>
            <person name="Madera M."/>
            <person name="Marchionni L."/>
            <person name="Matsuda H."/>
            <person name="Matsuzawa S."/>
            <person name="Miki H."/>
            <person name="Mignone F."/>
            <person name="Miyake S."/>
            <person name="Morris K."/>
            <person name="Mottagui-Tabar S."/>
            <person name="Mulder N."/>
            <person name="Nakano N."/>
            <person name="Nakauchi H."/>
            <person name="Ng P."/>
            <person name="Nilsson R."/>
            <person name="Nishiguchi S."/>
            <person name="Nishikawa S."/>
            <person name="Nori F."/>
            <person name="Ohara O."/>
            <person name="Okazaki Y."/>
            <person name="Orlando V."/>
            <person name="Pang K.C."/>
            <person name="Pavan W.J."/>
            <person name="Pavesi G."/>
            <person name="Pesole G."/>
            <person name="Petrovsky N."/>
            <person name="Piazza S."/>
            <person name="Reed J."/>
            <person name="Reid J.F."/>
            <person name="Ring B.Z."/>
            <person name="Ringwald M."/>
            <person name="Rost B."/>
            <person name="Ruan Y."/>
            <person name="Salzberg S.L."/>
            <person name="Sandelin A."/>
            <person name="Schneider C."/>
            <person name="Schoenbach C."/>
            <person name="Sekiguchi K."/>
            <person name="Semple C.A."/>
            <person name="Seno S."/>
            <person name="Sessa L."/>
            <person name="Sheng Y."/>
            <person name="Shibata Y."/>
            <person name="Shimada H."/>
            <person name="Shimada K."/>
            <person name="Silva D."/>
            <person name="Sinclair B."/>
            <person name="Sperling S."/>
            <person name="Stupka E."/>
            <person name="Sugiura K."/>
            <person name="Sultana R."/>
            <person name="Takenaka Y."/>
            <person name="Taki K."/>
            <person name="Tammoja K."/>
            <person name="Tan S.L."/>
            <person name="Tang S."/>
            <person name="Taylor M.S."/>
            <person name="Tegner J."/>
            <person name="Teichmann S.A."/>
            <person name="Ueda H.R."/>
            <person name="van Nimwegen E."/>
            <person name="Verardo R."/>
            <person name="Wei C.L."/>
            <person name="Yagi K."/>
            <person name="Yamanishi H."/>
            <person name="Zabarovsky E."/>
            <person name="Zhu S."/>
            <person name="Zimmer A."/>
            <person name="Hide W."/>
            <person name="Bult C."/>
            <person name="Grimmond S.M."/>
            <person name="Teasdale R.D."/>
            <person name="Liu E.T."/>
            <person name="Brusic V."/>
            <person name="Quackenbush J."/>
            <person name="Wahlestedt C."/>
            <person name="Mattick J.S."/>
            <person name="Hume D.A."/>
            <person name="Kai C."/>
            <person name="Sasaki D."/>
            <person name="Tomaru Y."/>
            <person name="Fukuda S."/>
            <person name="Kanamori-Katayama M."/>
            <person name="Suzuki M."/>
            <person name="Aoki J."/>
            <person name="Arakawa T."/>
            <person name="Iida J."/>
            <person name="Imamura K."/>
            <person name="Itoh M."/>
            <person name="Kato T."/>
            <person name="Kawaji H."/>
            <person name="Kawagashira N."/>
            <person name="Kawashima T."/>
            <person name="Kojima M."/>
            <person name="Kondo S."/>
            <person name="Konno H."/>
            <person name="Nakano K."/>
            <person name="Ninomiya N."/>
            <person name="Nishio T."/>
            <person name="Okada M."/>
            <person name="Plessy C."/>
            <person name="Shibata K."/>
            <person name="Shiraki T."/>
            <person name="Suzuki S."/>
            <person name="Tagami M."/>
            <person name="Waki K."/>
            <person name="Watahiki A."/>
            <person name="Okamura-Oho Y."/>
            <person name="Suzuki H."/>
            <person name="Kawai J."/>
            <person name="Hayashizaki Y."/>
        </authorList>
    </citation>
    <scope>NUCLEOTIDE SEQUENCE [LARGE SCALE MRNA]</scope>
    <source>
        <strain>NOD</strain>
    </source>
</reference>
<reference key="3">
    <citation type="journal article" date="2009" name="PLoS Biol.">
        <title>Lineage-specific biology revealed by a finished genome assembly of the mouse.</title>
        <authorList>
            <person name="Church D.M."/>
            <person name="Goodstadt L."/>
            <person name="Hillier L.W."/>
            <person name="Zody M.C."/>
            <person name="Goldstein S."/>
            <person name="She X."/>
            <person name="Bult C.J."/>
            <person name="Agarwala R."/>
            <person name="Cherry J.L."/>
            <person name="DiCuccio M."/>
            <person name="Hlavina W."/>
            <person name="Kapustin Y."/>
            <person name="Meric P."/>
            <person name="Maglott D."/>
            <person name="Birtle Z."/>
            <person name="Marques A.C."/>
            <person name="Graves T."/>
            <person name="Zhou S."/>
            <person name="Teague B."/>
            <person name="Potamousis K."/>
            <person name="Churas C."/>
            <person name="Place M."/>
            <person name="Herschleb J."/>
            <person name="Runnheim R."/>
            <person name="Forrest D."/>
            <person name="Amos-Landgraf J."/>
            <person name="Schwartz D.C."/>
            <person name="Cheng Z."/>
            <person name="Lindblad-Toh K."/>
            <person name="Eichler E.E."/>
            <person name="Ponting C.P."/>
        </authorList>
    </citation>
    <scope>NUCLEOTIDE SEQUENCE [LARGE SCALE GENOMIC DNA]</scope>
    <source>
        <strain>C57BL/6J</strain>
    </source>
</reference>
<reference key="4">
    <citation type="journal article" date="2004" name="Genome Res.">
        <title>The status, quality, and expansion of the NIH full-length cDNA project: the Mammalian Gene Collection (MGC).</title>
        <authorList>
            <consortium name="The MGC Project Team"/>
        </authorList>
    </citation>
    <scope>NUCLEOTIDE SEQUENCE [LARGE SCALE MRNA]</scope>
    <source>
        <strain>C57BL/6J</strain>
        <tissue>Brain</tissue>
    </source>
</reference>
<reference key="5">
    <citation type="journal article" date="2006" name="J. Clin. Invest.">
        <title>Mutation of beta-glucosidase 2 causes glycolipid storage disease and impaired male fertility.</title>
        <authorList>
            <person name="Yildiz Y."/>
            <person name="Matern H."/>
            <person name="Thompson B."/>
            <person name="Allegood J.C."/>
            <person name="Warren R.L."/>
            <person name="Ramirez D.M.O."/>
            <person name="Hammer R.E."/>
            <person name="Hamra F.K."/>
            <person name="Matern S."/>
            <person name="Russell D.W."/>
        </authorList>
    </citation>
    <scope>FUNCTION</scope>
    <scope>CATALYTIC ACTIVITY</scope>
    <scope>PATHWAY</scope>
    <scope>DISRUPTION PHENOTYPE</scope>
    <scope>TISSUE SPECIFICITY</scope>
</reference>
<reference key="6">
    <citation type="journal article" date="2010" name="Cell">
        <title>A tissue-specific atlas of mouse protein phosphorylation and expression.</title>
        <authorList>
            <person name="Huttlin E.L."/>
            <person name="Jedrychowski M.P."/>
            <person name="Elias J.E."/>
            <person name="Goswami T."/>
            <person name="Rad R."/>
            <person name="Beausoleil S.A."/>
            <person name="Villen J."/>
            <person name="Haas W."/>
            <person name="Sowa M.E."/>
            <person name="Gygi S.P."/>
        </authorList>
    </citation>
    <scope>PHOSPHORYLATION [LARGE SCALE ANALYSIS] AT SER-893</scope>
    <scope>IDENTIFICATION BY MASS SPECTROMETRY [LARGE SCALE ANALYSIS]</scope>
    <source>
        <tissue>Brain</tissue>
        <tissue>Heart</tissue>
        <tissue>Kidney</tissue>
        <tissue>Lung</tissue>
        <tissue>Spleen</tissue>
        <tissue>Testis</tissue>
    </source>
</reference>
<reference key="7">
    <citation type="journal article" date="2013" name="J. Biol. Chem.">
        <title>The non-lysosomal beta-glucosidase GBA2 is a non-integral membrane-associated protein at the endoplasmic reticulum (ER) and Golgi.</title>
        <authorList>
            <person name="Korschen H.G."/>
            <person name="Yildiz Y."/>
            <person name="Raju D.N."/>
            <person name="Schonauer S."/>
            <person name="Bonigk W."/>
            <person name="Jansen V."/>
            <person name="Kremmer E."/>
            <person name="Kaupp U.B."/>
            <person name="Wachten D."/>
        </authorList>
    </citation>
    <scope>FUNCTION</scope>
    <scope>CATALYTIC ACTIVITY</scope>
    <scope>ACTIVITY REGULATION</scope>
    <scope>PATHWAY</scope>
    <scope>SUBCELLULAR LOCATION</scope>
    <scope>TISSUE SPECIFICITY</scope>
</reference>
<reference key="8">
    <citation type="journal article" date="2015" name="PLoS Genet.">
        <title>Accumulation of glucosylceramide in the absence of the beta-glucosidase GBA2 alters cytoskeletal dynamics.</title>
        <authorList>
            <person name="Raju D."/>
            <person name="Schonauer S."/>
            <person name="Hamzeh H."/>
            <person name="Flynn K.C."/>
            <person name="Bradke F."/>
            <person name="Vom Dorp K."/>
            <person name="Doermann P."/>
            <person name="Yildiz Y."/>
            <person name="Troetschel C."/>
            <person name="Poetsch A."/>
            <person name="Breiden B."/>
            <person name="Sandhoff K."/>
            <person name="Koerschen H.G."/>
            <person name="Wachten D."/>
        </authorList>
    </citation>
    <scope>FUNCTION</scope>
</reference>
<reference key="9">
    <citation type="journal article" date="2016" name="J. Lipid Res.">
        <title>Glucosylated cholesterol in mammalian cells and tissues: formation and degradation by multiple cellular beta-glucosidases.</title>
        <authorList>
            <person name="Marques A.R."/>
            <person name="Mirzaian M."/>
            <person name="Akiyama H."/>
            <person name="Wisse P."/>
            <person name="Ferraz M.J."/>
            <person name="Gaspar P."/>
            <person name="Ghauharali-van der Vlugt K."/>
            <person name="Meijer R."/>
            <person name="Giraldo P."/>
            <person name="Alfonso P."/>
            <person name="Irun P."/>
            <person name="Dahl M."/>
            <person name="Karlsson S."/>
            <person name="Pavlova E.V."/>
            <person name="Cox T.M."/>
            <person name="Scheij S."/>
            <person name="Verhoek M."/>
            <person name="Ottenhoff R."/>
            <person name="van Roomen C.P."/>
            <person name="Pannu N.S."/>
            <person name="van Eijk M."/>
            <person name="Dekker N."/>
            <person name="Boot R.G."/>
            <person name="Overkleeft H.S."/>
            <person name="Blommaart E."/>
            <person name="Hirabayashi Y."/>
            <person name="Aerts J.M."/>
        </authorList>
    </citation>
    <scope>FUNCTION</scope>
    <scope>CATALYTIC ACTIVITY</scope>
    <scope>ACTIVITY REGULATION</scope>
    <scope>BIOPHYSICOCHEMICAL PROPERTIES</scope>
    <scope>PATHWAY</scope>
</reference>
<reference key="10">
    <citation type="journal article" date="2017" name="J. Biol. Chem.">
        <title>Identification of a feedback loop involving beta-glucosidase 2 and its product sphingosine sheds light on the molecular mechanisms in Gaucher disease.</title>
        <authorList>
            <person name="Schonauer S."/>
            <person name="Koerschen H.G."/>
            <person name="Penno A."/>
            <person name="Rennhack A."/>
            <person name="Breiden B."/>
            <person name="Sandhoff K."/>
            <person name="Gutbrod K."/>
            <person name="Doermann P."/>
            <person name="Raju D.N."/>
            <person name="Haberkant P."/>
            <person name="Gerl M.J."/>
            <person name="Bruegger B."/>
            <person name="Zigdon H."/>
            <person name="Vardi A."/>
            <person name="Futerman A.H."/>
            <person name="Thiele C."/>
            <person name="Wachten D."/>
        </authorList>
    </citation>
    <scope>ACTIVITY REGULATION</scope>
</reference>
<reference key="11">
    <citation type="journal article" date="2020" name="J. Biol. Chem.">
        <title>Glucocerebrosidases catalyze a transgalactosylation reaction that yields a newly-identified brain sterol metabolite, galactosylated cholesterol.</title>
        <authorList>
            <person name="Akiyama H."/>
            <person name="Ide M."/>
            <person name="Nagatsuka Y."/>
            <person name="Sayano T."/>
            <person name="Nakanishi E."/>
            <person name="Uemura N."/>
            <person name="Yuyama K."/>
            <person name="Yamaguchi Y."/>
            <person name="Kamiguchi H."/>
            <person name="Takahashi R."/>
            <person name="Aerts J.M.F.G."/>
            <person name="Greimel P."/>
            <person name="Hirabayashi Y."/>
        </authorList>
    </citation>
    <scope>FUNCTION</scope>
    <scope>CATALYTIC ACTIVITY</scope>
    <scope>PATHWAY</scope>
</reference>
<protein>
    <recommendedName>
        <fullName evidence="10">Non-lysosomal glucosylceramidase</fullName>
        <shortName evidence="9">NLGase</shortName>
        <ecNumber evidence="3">3.2.1.45</ecNumber>
    </recommendedName>
    <alternativeName>
        <fullName>Beta-glucocerebrosidase 2</fullName>
        <shortName>Beta-glucosidase 2</shortName>
    </alternativeName>
    <alternativeName>
        <fullName evidence="11">Bile acid beta-glucosidase GBA2</fullName>
    </alternativeName>
    <alternativeName>
        <fullName evidence="1">Bile acid glucosyl transferase GBA2</fullName>
    </alternativeName>
    <alternativeName>
        <fullName evidence="12">Cholesterol glucosyltransferase GBA2</fullName>
        <ecNumber evidence="6">2.4.1.-</ecNumber>
    </alternativeName>
    <alternativeName>
        <fullName evidence="12">Cholesteryl-beta-glucosidase GBA2</fullName>
        <ecNumber evidence="6">3.2.1.-</ecNumber>
    </alternativeName>
    <alternativeName>
        <fullName>Glucosylceramidase 2</fullName>
    </alternativeName>
    <alternativeName>
        <fullName evidence="10">Non-lysosomal cholesterol glycosyltransferase</fullName>
    </alternativeName>
    <alternativeName>
        <fullName evidence="10">Non-lysosomal galactosylceramidase</fullName>
        <ecNumber evidence="8">3.2.1.46</ecNumber>
    </alternativeName>
    <alternativeName>
        <fullName evidence="10">Non-lysosomal glycosylceramidase</fullName>
    </alternativeName>
</protein>
<dbReference type="EC" id="3.2.1.45" evidence="3"/>
<dbReference type="EC" id="2.4.1.-" evidence="6"/>
<dbReference type="EC" id="3.2.1.-" evidence="6"/>
<dbReference type="EC" id="3.2.1.46" evidence="8"/>
<dbReference type="EMBL" id="AK173213">
    <property type="protein sequence ID" value="BAD32491.1"/>
    <property type="status" value="ALT_INIT"/>
    <property type="molecule type" value="mRNA"/>
</dbReference>
<dbReference type="EMBL" id="AK089192">
    <property type="protein sequence ID" value="BAC40785.1"/>
    <property type="molecule type" value="mRNA"/>
</dbReference>
<dbReference type="EMBL" id="AL732626">
    <property type="status" value="NOT_ANNOTATED_CDS"/>
    <property type="molecule type" value="Genomic_DNA"/>
</dbReference>
<dbReference type="EMBL" id="BC056935">
    <property type="protein sequence ID" value="AAH56935.1"/>
    <property type="molecule type" value="mRNA"/>
</dbReference>
<dbReference type="CCDS" id="CCDS18103.1"/>
<dbReference type="RefSeq" id="NP_766280.2">
    <property type="nucleotide sequence ID" value="NM_172692.4"/>
</dbReference>
<dbReference type="SMR" id="Q69ZF3"/>
<dbReference type="BioGRID" id="230933">
    <property type="interactions" value="2"/>
</dbReference>
<dbReference type="FunCoup" id="Q69ZF3">
    <property type="interactions" value="1199"/>
</dbReference>
<dbReference type="STRING" id="10090.ENSMUSP00000030189"/>
<dbReference type="BindingDB" id="Q69ZF3"/>
<dbReference type="ChEMBL" id="CHEMBL5614"/>
<dbReference type="DrugCentral" id="Q69ZF3"/>
<dbReference type="SwissLipids" id="SLP:000001383"/>
<dbReference type="CAZy" id="GH116">
    <property type="family name" value="Glycoside Hydrolase Family 116"/>
</dbReference>
<dbReference type="GlyGen" id="Q69ZF3">
    <property type="glycosylation" value="2 sites, 2 N-linked glycans (2 sites)"/>
</dbReference>
<dbReference type="iPTMnet" id="Q69ZF3"/>
<dbReference type="PhosphoSitePlus" id="Q69ZF3"/>
<dbReference type="SwissPalm" id="Q69ZF3"/>
<dbReference type="jPOST" id="Q69ZF3"/>
<dbReference type="PaxDb" id="10090-ENSMUSP00000030189"/>
<dbReference type="PeptideAtlas" id="Q69ZF3"/>
<dbReference type="ProteomicsDB" id="273415"/>
<dbReference type="Pumba" id="Q69ZF3"/>
<dbReference type="Antibodypedia" id="11711">
    <property type="antibodies" value="107 antibodies from 18 providers"/>
</dbReference>
<dbReference type="DNASU" id="230101"/>
<dbReference type="Ensembl" id="ENSMUST00000030189.14">
    <property type="protein sequence ID" value="ENSMUSP00000030189.8"/>
    <property type="gene ID" value="ENSMUSG00000028467.16"/>
</dbReference>
<dbReference type="GeneID" id="230101"/>
<dbReference type="KEGG" id="mmu:230101"/>
<dbReference type="UCSC" id="uc008sqi.2">
    <property type="organism name" value="mouse"/>
</dbReference>
<dbReference type="AGR" id="MGI:2654325"/>
<dbReference type="CTD" id="57704"/>
<dbReference type="MGI" id="MGI:2654325">
    <property type="gene designation" value="Gba2"/>
</dbReference>
<dbReference type="VEuPathDB" id="HostDB:ENSMUSG00000028467"/>
<dbReference type="eggNOG" id="KOG2119">
    <property type="taxonomic scope" value="Eukaryota"/>
</dbReference>
<dbReference type="GeneTree" id="ENSGT00390000010998"/>
<dbReference type="HOGENOM" id="CLU_006322_1_1_1"/>
<dbReference type="InParanoid" id="Q69ZF3"/>
<dbReference type="OMA" id="HDLGAPN"/>
<dbReference type="OrthoDB" id="730489at2759"/>
<dbReference type="PhylomeDB" id="Q69ZF3"/>
<dbReference type="TreeFam" id="TF313888"/>
<dbReference type="BRENDA" id="3.2.1.45">
    <property type="organism ID" value="3474"/>
</dbReference>
<dbReference type="Reactome" id="R-MMU-9840310">
    <property type="pathway name" value="Glycosphingolipid catabolism"/>
</dbReference>
<dbReference type="UniPathway" id="UPA00222"/>
<dbReference type="UniPathway" id="UPA00296"/>
<dbReference type="BioGRID-ORCS" id="230101">
    <property type="hits" value="3 hits in 78 CRISPR screens"/>
</dbReference>
<dbReference type="PRO" id="PR:Q69ZF3"/>
<dbReference type="Proteomes" id="UP000000589">
    <property type="component" value="Chromosome 4"/>
</dbReference>
<dbReference type="RNAct" id="Q69ZF3">
    <property type="molecule type" value="protein"/>
</dbReference>
<dbReference type="Bgee" id="ENSMUSG00000028467">
    <property type="expression patterns" value="Expressed in medial dorsal nucleus of thalamus and 246 other cell types or tissues"/>
</dbReference>
<dbReference type="ExpressionAtlas" id="Q69ZF3">
    <property type="expression patterns" value="baseline and differential"/>
</dbReference>
<dbReference type="GO" id="GO:0005829">
    <property type="term" value="C:cytosol"/>
    <property type="evidence" value="ECO:0000314"/>
    <property type="project" value="UniProtKB"/>
</dbReference>
<dbReference type="GO" id="GO:0005789">
    <property type="term" value="C:endoplasmic reticulum membrane"/>
    <property type="evidence" value="ECO:0000314"/>
    <property type="project" value="UniProtKB"/>
</dbReference>
<dbReference type="GO" id="GO:0000139">
    <property type="term" value="C:Golgi membrane"/>
    <property type="evidence" value="ECO:0000314"/>
    <property type="project" value="UniProtKB"/>
</dbReference>
<dbReference type="GO" id="GO:0008422">
    <property type="term" value="F:beta-glucosidase activity"/>
    <property type="evidence" value="ECO:0000314"/>
    <property type="project" value="MGI"/>
</dbReference>
<dbReference type="GO" id="GO:0004336">
    <property type="term" value="F:galactosylceramidase activity"/>
    <property type="evidence" value="ECO:0007669"/>
    <property type="project" value="RHEA"/>
</dbReference>
<dbReference type="GO" id="GO:0004348">
    <property type="term" value="F:glucosylceramidase activity"/>
    <property type="evidence" value="ECO:0000314"/>
    <property type="project" value="UniProtKB"/>
</dbReference>
<dbReference type="GO" id="GO:0046527">
    <property type="term" value="F:glucosyltransferase activity"/>
    <property type="evidence" value="ECO:0000314"/>
    <property type="project" value="UniProtKB"/>
</dbReference>
<dbReference type="GO" id="GO:0050295">
    <property type="term" value="F:steryl-beta-glucosidase activity"/>
    <property type="evidence" value="ECO:0000314"/>
    <property type="project" value="UniProtKB"/>
</dbReference>
<dbReference type="GO" id="GO:0005975">
    <property type="term" value="P:carbohydrate metabolic process"/>
    <property type="evidence" value="ECO:0007669"/>
    <property type="project" value="InterPro"/>
</dbReference>
<dbReference type="GO" id="GO:0021954">
    <property type="term" value="P:central nervous system neuron development"/>
    <property type="evidence" value="ECO:0000250"/>
    <property type="project" value="UniProtKB"/>
</dbReference>
<dbReference type="GO" id="GO:0008203">
    <property type="term" value="P:cholesterol metabolic process"/>
    <property type="evidence" value="ECO:0000315"/>
    <property type="project" value="UniProtKB"/>
</dbReference>
<dbReference type="GO" id="GO:0006680">
    <property type="term" value="P:glucosylceramide catabolic process"/>
    <property type="evidence" value="ECO:0000314"/>
    <property type="project" value="UniProtKB"/>
</dbReference>
<dbReference type="GO" id="GO:0016139">
    <property type="term" value="P:glycoside catabolic process"/>
    <property type="evidence" value="ECO:0007669"/>
    <property type="project" value="Ensembl"/>
</dbReference>
<dbReference type="GO" id="GO:0030259">
    <property type="term" value="P:lipid glycosylation"/>
    <property type="evidence" value="ECO:0000314"/>
    <property type="project" value="UniProtKB"/>
</dbReference>
<dbReference type="GO" id="GO:0030833">
    <property type="term" value="P:regulation of actin filament polymerization"/>
    <property type="evidence" value="ECO:0000315"/>
    <property type="project" value="UniProtKB"/>
</dbReference>
<dbReference type="GO" id="GO:0097035">
    <property type="term" value="P:regulation of membrane lipid distribution"/>
    <property type="evidence" value="ECO:0000315"/>
    <property type="project" value="UniProtKB"/>
</dbReference>
<dbReference type="GO" id="GO:0031113">
    <property type="term" value="P:regulation of microtubule polymerization"/>
    <property type="evidence" value="ECO:0000315"/>
    <property type="project" value="UniProtKB"/>
</dbReference>
<dbReference type="FunFam" id="1.50.10.10:FF:000013">
    <property type="entry name" value="Non-lysosomal glucosylceramidase"/>
    <property type="match status" value="1"/>
</dbReference>
<dbReference type="Gene3D" id="1.50.10.10">
    <property type="match status" value="1"/>
</dbReference>
<dbReference type="InterPro" id="IPR008928">
    <property type="entry name" value="6-hairpin_glycosidase_sf"/>
</dbReference>
<dbReference type="InterPro" id="IPR012341">
    <property type="entry name" value="6hp_glycosidase-like_sf"/>
</dbReference>
<dbReference type="InterPro" id="IPR014551">
    <property type="entry name" value="B_Glucosidase_GBA2-typ"/>
</dbReference>
<dbReference type="InterPro" id="IPR006775">
    <property type="entry name" value="GH116_catalytic"/>
</dbReference>
<dbReference type="InterPro" id="IPR024462">
    <property type="entry name" value="GH116_N"/>
</dbReference>
<dbReference type="InterPro" id="IPR052566">
    <property type="entry name" value="Non-lysos_glucosylceramidase"/>
</dbReference>
<dbReference type="PANTHER" id="PTHR12654">
    <property type="entry name" value="BILE ACID BETA-GLUCOSIDASE-RELATED"/>
    <property type="match status" value="1"/>
</dbReference>
<dbReference type="PANTHER" id="PTHR12654:SF0">
    <property type="entry name" value="NON-LYSOSOMAL GLUCOSYLCERAMIDASE"/>
    <property type="match status" value="1"/>
</dbReference>
<dbReference type="Pfam" id="PF04685">
    <property type="entry name" value="DUF608"/>
    <property type="match status" value="1"/>
</dbReference>
<dbReference type="Pfam" id="PF12215">
    <property type="entry name" value="Glyco_hydr_116N"/>
    <property type="match status" value="1"/>
</dbReference>
<dbReference type="PIRSF" id="PIRSF028944">
    <property type="entry name" value="Beta_gluc_GBA2"/>
    <property type="match status" value="1"/>
</dbReference>
<dbReference type="SUPFAM" id="SSF48208">
    <property type="entry name" value="Six-hairpin glycosidases"/>
    <property type="match status" value="1"/>
</dbReference>
<keyword id="KW-0153">Cholesterol metabolism</keyword>
<keyword id="KW-0256">Endoplasmic reticulum</keyword>
<keyword id="KW-0326">Glycosidase</keyword>
<keyword id="KW-0328">Glycosyltransferase</keyword>
<keyword id="KW-0333">Golgi apparatus</keyword>
<keyword id="KW-0378">Hydrolase</keyword>
<keyword id="KW-0443">Lipid metabolism</keyword>
<keyword id="KW-0472">Membrane</keyword>
<keyword id="KW-0597">Phosphoprotein</keyword>
<keyword id="KW-1185">Reference proteome</keyword>
<keyword id="KW-0746">Sphingolipid metabolism</keyword>
<keyword id="KW-0753">Steroid metabolism</keyword>
<keyword id="KW-1207">Sterol metabolism</keyword>
<keyword id="KW-0808">Transferase</keyword>
<accession>Q69ZF3</accession>
<accession>Q6PGM3</accession>
<accession>Q8BTN9</accession>
<sequence>MVTCVPASEQVGCAERDSQVYCEDTGGTEAVRVTDCGSPEDSGPQDEPSYCNSEDSGQLMASYEGKARGYQVPPFGWRICLAHEFAEKRRPFQANNISLSNLVKHLGMGLRYLKWWYRKTHVEKKTPFIDMLNSLPLRQIYGCPLGGIGGGTITRGWRGQFCRWQLNPGMYQHQTVIADQFIVCLRRDGRTVYQQVLSLELPNVLRSWNWGLCGYFAFYHALYPRAWTVYQLPGQNVTLTCRQVTPILPHDYQDSSLPVGVFVWDVENEGDETLDVSITFSMRNGLGGEDDAAGSLWNEPFRLEQGGTTVQGLLLHHPTPPNPYTMAVAARCTADTTVTHTTAFDPNGTGQQVWQDLLQDGQLDSPAGQSTPTQKGEGIAGAVCVSSKLLPRSRCCLEFSLAWDMPKIMFGAKSQVHYRRYTRFFGSDGDVAPALSHYALCHYADWEDRISAWQNPVLDDRTLPAWYKSALFNELYFLADGGTVWLEVPADSLPEGLGGSMRQLRSTLQDYGRFGYLEGQEYRMYNTYDVHFYASFALVMLWPKLELSLQYDMALATLKEDLTRRRYLMSGVVAPVKRRNVIPHDIGDPDDEPWLRVNAYLIHDTADWKDLNLKFVLQIYRDYYLTGDQGFLEDMWPVCLAVMESEMKFDKDQDGLIENGGYADQTYDAWVTTGPSAYCGGLWLAAVAVMVQMAVLCGAQDVQERFASILCRGREAYERLLWNGRYYNYDSSSHPQSRSIMSDQCAGQWFLRACGLGEGDTEVFPTLHVVRALQTIFELNVQAFAGGAMGAVNGMHPHGVPDRSSVQSDEVWVGVVYGLAATMIQEGLTWEGFRTAEGCYRTVWERLGLAFQTPEAYCQQQVFRSLAYMRPLSIWAMQLALQQQQHKKSRRPSVTQGTGLSTQPECGPKRSLANLNSE</sequence>
<gene>
    <name evidence="15" type="primary">Gba2</name>
    <name evidence="14" type="synonym">Kiaa1605</name>
</gene>
<feature type="chain" id="PRO_0000283759" description="Non-lysosomal glucosylceramidase">
    <location>
        <begin position="1"/>
        <end position="918"/>
    </location>
</feature>
<feature type="region of interest" description="Disordered" evidence="2">
    <location>
        <begin position="886"/>
        <end position="918"/>
    </location>
</feature>
<feature type="compositionally biased region" description="Polar residues" evidence="2">
    <location>
        <begin position="892"/>
        <end position="904"/>
    </location>
</feature>
<feature type="modified residue" description="Phosphoserine" evidence="16">
    <location>
        <position position="893"/>
    </location>
</feature>
<feature type="sequence conflict" description="In Ref. 2; BAC40785." evidence="10" ref="2">
    <original>V</original>
    <variation>I</variation>
    <location>
        <position position="385"/>
    </location>
</feature>
<name>GBA2_MOUSE</name>
<comment type="function">
    <text evidence="3 4 5 6 8 9">Non-lysosomal glucosylceramidase that catalyzes the hydrolysis of glucosylceramides/GlcCers (such as beta-D-glucosyl-(1&lt;-&gt;1')-N-acylsphing-4-enine) to free glucose and ceramides (such as N-acylsphing-4-enine) (PubMed:17080196, PubMed:23250757). GlcCers are membrane glycosphingolipids that have a wide intracellular distribution (PubMed:23250757). They are the main precursors of more complex glycosphingolipids that play a role in cellular growth, differentiation, adhesion, signaling, cytoskeletal dynamics and membrane properties (PubMed:25803043). Also involved in the transglucosylation of cholesterol, transferring glucose from GlcCer, thereby modifying its water solubility and biological properties (PubMed:26724485, PubMed:32144204). Under specific conditions, may catalyze the reverse reaction, transferring glucose from cholesteryl-3-beta-D-glucoside to ceramide (such as N-acylsphing-4-enine) (PubMed:26724485, PubMed:32144204). May play a role in the metabolism of bile acids (PubMed:17080196). Able to hydrolyze bile acid 3-O-glucosides as well as to produce bile acid-glucose conjugates thanks to a bile acid glucosyl transferase activity (PubMed:17080196). Catalyzes the hydrolysis of galactosylceramides/GalCers (such as beta-D-galactosyl-(1&lt;-&gt;1')-N-acylsphing-4-enine), as well as galactosyl transfer between GalCers and cholesterol in vitro with lower activity compared with their activity against GlcCers (PubMed:32144204).</text>
</comment>
<comment type="catalytic activity">
    <reaction evidence="3 4">
        <text>a beta-D-glucosyl-(1&lt;-&gt;1')-N-acylsphing-4-enine + H2O = an N-acylsphing-4-enine + D-glucose</text>
        <dbReference type="Rhea" id="RHEA:13269"/>
        <dbReference type="ChEBI" id="CHEBI:4167"/>
        <dbReference type="ChEBI" id="CHEBI:15377"/>
        <dbReference type="ChEBI" id="CHEBI:22801"/>
        <dbReference type="ChEBI" id="CHEBI:52639"/>
        <dbReference type="EC" id="3.2.1.45"/>
    </reaction>
    <physiologicalReaction direction="left-to-right" evidence="3">
        <dbReference type="Rhea" id="RHEA:13270"/>
    </physiologicalReaction>
</comment>
<comment type="catalytic activity">
    <reaction evidence="8">
        <text>a beta-D-galactosyl-(1&lt;-&gt;1')-N-acylsphing-4-enine + H2O = an N-acylsphing-4-enine + D-galactose</text>
        <dbReference type="Rhea" id="RHEA:14297"/>
        <dbReference type="ChEBI" id="CHEBI:4139"/>
        <dbReference type="ChEBI" id="CHEBI:15377"/>
        <dbReference type="ChEBI" id="CHEBI:18390"/>
        <dbReference type="ChEBI" id="CHEBI:52639"/>
        <dbReference type="EC" id="3.2.1.46"/>
    </reaction>
    <physiologicalReaction direction="left-to-right" evidence="8">
        <dbReference type="Rhea" id="RHEA:14298"/>
    </physiologicalReaction>
</comment>
<comment type="catalytic activity">
    <reaction evidence="3">
        <text>beta-D-glucosyl-(1-&gt;3)-O-lithocholate + H2O = lithocholate + D-glucose</text>
        <dbReference type="Rhea" id="RHEA:58344"/>
        <dbReference type="ChEBI" id="CHEBI:4167"/>
        <dbReference type="ChEBI" id="CHEBI:15377"/>
        <dbReference type="ChEBI" id="CHEBI:29744"/>
        <dbReference type="ChEBI" id="CHEBI:142611"/>
    </reaction>
    <physiologicalReaction direction="left-to-right" evidence="11">
        <dbReference type="Rhea" id="RHEA:58345"/>
    </physiologicalReaction>
</comment>
<comment type="catalytic activity">
    <reaction evidence="1">
        <text>beta-D-glucosyl-(1-&gt;3)-O-chenodeoxycholate + H2O = chenodeoxycholate + D-glucose</text>
        <dbReference type="Rhea" id="RHEA:58340"/>
        <dbReference type="ChEBI" id="CHEBI:4167"/>
        <dbReference type="ChEBI" id="CHEBI:15377"/>
        <dbReference type="ChEBI" id="CHEBI:36234"/>
        <dbReference type="ChEBI" id="CHEBI:142610"/>
    </reaction>
    <physiologicalReaction direction="left-to-right" evidence="1">
        <dbReference type="Rhea" id="RHEA:58341"/>
    </physiologicalReaction>
</comment>
<comment type="catalytic activity">
    <reaction evidence="1">
        <text>a di-trans,poly-cis-dolichyl beta-D-glucosyl phosphate + chenodeoxycholate = beta-D-glucosyl-(1-&gt;3)-O-chenodeoxycholate + a di-trans,poly-cis-dolichyl phosphate + H(+)</text>
        <dbReference type="Rhea" id="RHEA:59104"/>
        <dbReference type="Rhea" id="RHEA-COMP:19498"/>
        <dbReference type="Rhea" id="RHEA-COMP:19502"/>
        <dbReference type="ChEBI" id="CHEBI:15378"/>
        <dbReference type="ChEBI" id="CHEBI:36234"/>
        <dbReference type="ChEBI" id="CHEBI:57525"/>
        <dbReference type="ChEBI" id="CHEBI:57683"/>
        <dbReference type="ChEBI" id="CHEBI:142610"/>
    </reaction>
    <physiologicalReaction direction="left-to-right" evidence="1">
        <dbReference type="Rhea" id="RHEA:59105"/>
    </physiologicalReaction>
</comment>
<comment type="catalytic activity">
    <reaction evidence="1">
        <text>octyl beta-D-glucose + chenodeoxycholate = beta-D-glucosyl-(1-&gt;3)-O-chenodeoxycholate + octan-1-ol</text>
        <dbReference type="Rhea" id="RHEA:59108"/>
        <dbReference type="ChEBI" id="CHEBI:16188"/>
        <dbReference type="ChEBI" id="CHEBI:36234"/>
        <dbReference type="ChEBI" id="CHEBI:41128"/>
        <dbReference type="ChEBI" id="CHEBI:142610"/>
    </reaction>
    <physiologicalReaction direction="left-to-right" evidence="1">
        <dbReference type="Rhea" id="RHEA:59109"/>
    </physiologicalReaction>
</comment>
<comment type="catalytic activity">
    <reaction evidence="6 8">
        <text>cholesteryl 3-beta-D-glucoside + H2O = cholesterol + D-glucose</text>
        <dbReference type="Rhea" id="RHEA:11956"/>
        <dbReference type="ChEBI" id="CHEBI:4167"/>
        <dbReference type="ChEBI" id="CHEBI:15377"/>
        <dbReference type="ChEBI" id="CHEBI:16113"/>
        <dbReference type="ChEBI" id="CHEBI:17495"/>
    </reaction>
    <physiologicalReaction direction="left-to-right" evidence="6 8">
        <dbReference type="Rhea" id="RHEA:11957"/>
    </physiologicalReaction>
</comment>
<comment type="catalytic activity">
    <reaction evidence="6 13">
        <text>a beta-D-glucosyl-(1&lt;-&gt;1')-N-acylsphing-4-enine + cholesterol = cholesteryl 3-beta-D-glucoside + an N-acylsphing-4-enine</text>
        <dbReference type="Rhea" id="RHEA:58264"/>
        <dbReference type="ChEBI" id="CHEBI:16113"/>
        <dbReference type="ChEBI" id="CHEBI:17495"/>
        <dbReference type="ChEBI" id="CHEBI:22801"/>
        <dbReference type="ChEBI" id="CHEBI:52639"/>
    </reaction>
    <physiologicalReaction direction="left-to-right" evidence="6 13">
        <dbReference type="Rhea" id="RHEA:58265"/>
    </physiologicalReaction>
    <physiologicalReaction direction="right-to-left" evidence="6 13">
        <dbReference type="Rhea" id="RHEA:58266"/>
    </physiologicalReaction>
</comment>
<comment type="catalytic activity">
    <reaction evidence="13">
        <text>beta-D-glucosyl-N-(9Z-octadecenoyl)-sphing-4E-enine + cholesterol = N-(9Z-octadecenoyl)-sphing-4-enine + cholesteryl 3-beta-D-glucoside</text>
        <dbReference type="Rhea" id="RHEA:58324"/>
        <dbReference type="ChEBI" id="CHEBI:16113"/>
        <dbReference type="ChEBI" id="CHEBI:17495"/>
        <dbReference type="ChEBI" id="CHEBI:77996"/>
        <dbReference type="ChEBI" id="CHEBI:139140"/>
    </reaction>
    <physiologicalReaction direction="left-to-right" evidence="13">
        <dbReference type="Rhea" id="RHEA:58325"/>
    </physiologicalReaction>
    <physiologicalReaction direction="right-to-left" evidence="13">
        <dbReference type="Rhea" id="RHEA:58326"/>
    </physiologicalReaction>
</comment>
<comment type="catalytic activity">
    <reaction evidence="13">
        <text>a beta-D-galactosyl-(1&lt;-&gt;1')-N-acylsphing-4-enine + cholesterol = cholesteryl 3-beta-D-galactoside + an N-acylsphing-4-enine</text>
        <dbReference type="Rhea" id="RHEA:70235"/>
        <dbReference type="ChEBI" id="CHEBI:16113"/>
        <dbReference type="ChEBI" id="CHEBI:18390"/>
        <dbReference type="ChEBI" id="CHEBI:52639"/>
        <dbReference type="ChEBI" id="CHEBI:189066"/>
    </reaction>
    <physiologicalReaction direction="left-to-right" evidence="13">
        <dbReference type="Rhea" id="RHEA:70236"/>
    </physiologicalReaction>
    <physiologicalReaction direction="right-to-left" evidence="13">
        <dbReference type="Rhea" id="RHEA:70237"/>
    </physiologicalReaction>
</comment>
<comment type="catalytic activity">
    <reaction evidence="1">
        <text>1-(beta-D-galactosyl)-N-dodecanoylsphing-4-enine + cholesterol = cholesteryl 3-beta-D-galactoside + N-dodecanoylsphing-4-enine</text>
        <dbReference type="Rhea" id="RHEA:70255"/>
        <dbReference type="ChEBI" id="CHEBI:16113"/>
        <dbReference type="ChEBI" id="CHEBI:72956"/>
        <dbReference type="ChEBI" id="CHEBI:73432"/>
        <dbReference type="ChEBI" id="CHEBI:189066"/>
    </reaction>
    <physiologicalReaction direction="left-to-right" evidence="1">
        <dbReference type="Rhea" id="RHEA:70256"/>
    </physiologicalReaction>
    <physiologicalReaction direction="right-to-left" evidence="1">
        <dbReference type="Rhea" id="RHEA:70257"/>
    </physiologicalReaction>
</comment>
<comment type="activity regulation">
    <text evidence="4 6 7">Enzymatic activity is dependent on membrane association and requires the presence of lipids (PubMed:23250757). Inhibited by N-(adamantanemethyloxypentyl)-deoxynojirimycin/AMP-DNM (PubMed:26724485). Inhibited by its product sphingosine/N-acylsphing-4-enine in a feedback loop (PubMed:28258214). Also inhibited by other non-acetylated sphingoid bases and their derivatives but not by sphingosine-1-phosphate and complex sphingolipids (PubMed:28258214).</text>
</comment>
<comment type="biophysicochemical properties">
    <phDependence>
        <text evidence="6">Optimum pH is between 6.0 and 7.0.</text>
    </phDependence>
</comment>
<comment type="pathway">
    <text evidence="3 4 6 13">Lipid metabolism; sphingolipid metabolism.</text>
</comment>
<comment type="pathway">
    <text evidence="6 13">Steroid metabolism; cholesterol metabolism.</text>
</comment>
<comment type="subcellular location">
    <subcellularLocation>
        <location evidence="4">Endoplasmic reticulum membrane</location>
        <topology evidence="4">Peripheral membrane protein</topology>
        <orientation evidence="4">Cytoplasmic side</orientation>
    </subcellularLocation>
    <subcellularLocation>
        <location evidence="4">Golgi apparatus membrane</location>
        <topology evidence="4">Peripheral membrane protein</topology>
        <orientation evidence="4">Cytoplasmic side</orientation>
    </subcellularLocation>
    <text evidence="1">Localization to the plasma membrane and alternative topologies have also been reported.</text>
</comment>
<comment type="tissue specificity">
    <text evidence="3 4">Widely expressed at low level (PubMed:17080196). Highly expressed in testis and brain (PubMed:17080196). Ubiquitously expressed in the brain (at protein level) (PubMed:23250757). Expressed by Sertoli cells (at protein level) (PubMed:17080196).</text>
</comment>
<comment type="disruption phenotype">
    <text evidence="3">Homozygous knockout mice display an accumulation of glucosylceramides in testis, brain and liver (PubMed:17080196). The accumulation of glucosylceramides in Sertoli cells alters sperm shape and males exhibit impaired fertility (PubMed:17080196). Despite the bile acid glucosidase and transferase activities measured in vitro, bile acid metabolism is normal in knockout mice (PubMed:17080196). No obvious neurological symptoms, organomegaly or lifespan alteration are observed (PubMed:17080196). Cholesterol metabolism and protein glycosylation are also normal in these mice (PubMed:17080196).</text>
</comment>
<comment type="similarity">
    <text evidence="10">Belongs to the non-lysosomal glucosylceramidase family.</text>
</comment>
<comment type="sequence caution" evidence="10">
    <conflict type="erroneous initiation">
        <sequence resource="EMBL-CDS" id="BAD32491"/>
    </conflict>
</comment>
<organism>
    <name type="scientific">Mus musculus</name>
    <name type="common">Mouse</name>
    <dbReference type="NCBI Taxonomy" id="10090"/>
    <lineage>
        <taxon>Eukaryota</taxon>
        <taxon>Metazoa</taxon>
        <taxon>Chordata</taxon>
        <taxon>Craniata</taxon>
        <taxon>Vertebrata</taxon>
        <taxon>Euteleostomi</taxon>
        <taxon>Mammalia</taxon>
        <taxon>Eutheria</taxon>
        <taxon>Euarchontoglires</taxon>
        <taxon>Glires</taxon>
        <taxon>Rodentia</taxon>
        <taxon>Myomorpha</taxon>
        <taxon>Muroidea</taxon>
        <taxon>Muridae</taxon>
        <taxon>Murinae</taxon>
        <taxon>Mus</taxon>
        <taxon>Mus</taxon>
    </lineage>
</organism>
<evidence type="ECO:0000250" key="1">
    <source>
        <dbReference type="UniProtKB" id="Q9HCG7"/>
    </source>
</evidence>
<evidence type="ECO:0000256" key="2">
    <source>
        <dbReference type="SAM" id="MobiDB-lite"/>
    </source>
</evidence>
<evidence type="ECO:0000269" key="3">
    <source>
    </source>
</evidence>
<evidence type="ECO:0000269" key="4">
    <source>
    </source>
</evidence>
<evidence type="ECO:0000269" key="5">
    <source>
    </source>
</evidence>
<evidence type="ECO:0000269" key="6">
    <source>
    </source>
</evidence>
<evidence type="ECO:0000269" key="7">
    <source>
    </source>
</evidence>
<evidence type="ECO:0000269" key="8">
    <source>
    </source>
</evidence>
<evidence type="ECO:0000303" key="9">
    <source>
    </source>
</evidence>
<evidence type="ECO:0000305" key="10"/>
<evidence type="ECO:0000305" key="11">
    <source>
    </source>
</evidence>
<evidence type="ECO:0000305" key="12">
    <source>
    </source>
</evidence>
<evidence type="ECO:0000305" key="13">
    <source>
    </source>
</evidence>
<evidence type="ECO:0000312" key="14">
    <source>
        <dbReference type="EMBL" id="BAD32491.1"/>
    </source>
</evidence>
<evidence type="ECO:0000312" key="15">
    <source>
        <dbReference type="MGI" id="MGI:2654325"/>
    </source>
</evidence>
<evidence type="ECO:0007744" key="16">
    <source>
    </source>
</evidence>